<evidence type="ECO:0000255" key="1">
    <source>
        <dbReference type="HAMAP-Rule" id="MF_01218"/>
    </source>
</evidence>
<name>UPP_LATSS</name>
<feature type="chain" id="PRO_1000053735" description="Uracil phosphoribosyltransferase">
    <location>
        <begin position="1"/>
        <end position="209"/>
    </location>
</feature>
<feature type="binding site" evidence="1">
    <location>
        <position position="79"/>
    </location>
    <ligand>
        <name>5-phospho-alpha-D-ribose 1-diphosphate</name>
        <dbReference type="ChEBI" id="CHEBI:58017"/>
    </ligand>
</feature>
<feature type="binding site" evidence="1">
    <location>
        <position position="104"/>
    </location>
    <ligand>
        <name>5-phospho-alpha-D-ribose 1-diphosphate</name>
        <dbReference type="ChEBI" id="CHEBI:58017"/>
    </ligand>
</feature>
<feature type="binding site" evidence="1">
    <location>
        <begin position="131"/>
        <end position="139"/>
    </location>
    <ligand>
        <name>5-phospho-alpha-D-ribose 1-diphosphate</name>
        <dbReference type="ChEBI" id="CHEBI:58017"/>
    </ligand>
</feature>
<feature type="binding site" evidence="1">
    <location>
        <position position="194"/>
    </location>
    <ligand>
        <name>uracil</name>
        <dbReference type="ChEBI" id="CHEBI:17568"/>
    </ligand>
</feature>
<feature type="binding site" evidence="1">
    <location>
        <begin position="199"/>
        <end position="201"/>
    </location>
    <ligand>
        <name>uracil</name>
        <dbReference type="ChEBI" id="CHEBI:17568"/>
    </ligand>
</feature>
<feature type="binding site" evidence="1">
    <location>
        <position position="200"/>
    </location>
    <ligand>
        <name>5-phospho-alpha-D-ribose 1-diphosphate</name>
        <dbReference type="ChEBI" id="CHEBI:58017"/>
    </ligand>
</feature>
<organism>
    <name type="scientific">Latilactobacillus sakei subsp. sakei (strain 23K)</name>
    <name type="common">Lactobacillus sakei subsp. sakei</name>
    <dbReference type="NCBI Taxonomy" id="314315"/>
    <lineage>
        <taxon>Bacteria</taxon>
        <taxon>Bacillati</taxon>
        <taxon>Bacillota</taxon>
        <taxon>Bacilli</taxon>
        <taxon>Lactobacillales</taxon>
        <taxon>Lactobacillaceae</taxon>
        <taxon>Latilactobacillus</taxon>
    </lineage>
</organism>
<gene>
    <name evidence="1" type="primary">upp</name>
    <name type="ordered locus">LCA_1133</name>
</gene>
<proteinExistence type="inferred from homology"/>
<comment type="function">
    <text evidence="1">Catalyzes the conversion of uracil and 5-phospho-alpha-D-ribose 1-diphosphate (PRPP) to UMP and diphosphate.</text>
</comment>
<comment type="catalytic activity">
    <reaction evidence="1">
        <text>UMP + diphosphate = 5-phospho-alpha-D-ribose 1-diphosphate + uracil</text>
        <dbReference type="Rhea" id="RHEA:13017"/>
        <dbReference type="ChEBI" id="CHEBI:17568"/>
        <dbReference type="ChEBI" id="CHEBI:33019"/>
        <dbReference type="ChEBI" id="CHEBI:57865"/>
        <dbReference type="ChEBI" id="CHEBI:58017"/>
        <dbReference type="EC" id="2.4.2.9"/>
    </reaction>
</comment>
<comment type="cofactor">
    <cofactor evidence="1">
        <name>Mg(2+)</name>
        <dbReference type="ChEBI" id="CHEBI:18420"/>
    </cofactor>
    <text evidence="1">Binds 1 Mg(2+) ion per subunit. The magnesium is bound as Mg-PRPP.</text>
</comment>
<comment type="activity regulation">
    <text evidence="1">Allosterically activated by GTP.</text>
</comment>
<comment type="pathway">
    <text evidence="1">Pyrimidine metabolism; UMP biosynthesis via salvage pathway; UMP from uracil: step 1/1.</text>
</comment>
<comment type="similarity">
    <text evidence="1">Belongs to the UPRTase family.</text>
</comment>
<sequence length="209" mass="22776">MAKFTVLNHPLIQHKLTIIRNKNTGTKVFREVANEIAELMVYEITRDLAMEDVEVETPMGPAIEKQLSGKKLAVVPILRAGLGMVDGVLELIPAAKVGHIGMYRDEKTLQPHEYFVKLPTDIDQRQLFIVDPMLATGGSAIMAIDALKKRGATSMRLVVLVAAPEGVKAVQEAHPDVDIYAAGLDDGLNEEGYIYPGLGDAGDRLFGTK</sequence>
<reference key="1">
    <citation type="journal article" date="2005" name="Nat. Biotechnol.">
        <title>The complete genome sequence of the meat-borne lactic acid bacterium Lactobacillus sakei 23K.</title>
        <authorList>
            <person name="Chaillou S."/>
            <person name="Champomier-Verges M.-C."/>
            <person name="Cornet M."/>
            <person name="Crutz-Le Coq A.-M."/>
            <person name="Dudez A.-M."/>
            <person name="Martin V."/>
            <person name="Beaufils S."/>
            <person name="Darbon-Rongere E."/>
            <person name="Bossy R."/>
            <person name="Loux V."/>
            <person name="Zagorec M."/>
        </authorList>
    </citation>
    <scope>NUCLEOTIDE SEQUENCE [LARGE SCALE GENOMIC DNA]</scope>
    <source>
        <strain>23K</strain>
    </source>
</reference>
<dbReference type="EC" id="2.4.2.9" evidence="1"/>
<dbReference type="EMBL" id="CR936503">
    <property type="protein sequence ID" value="CAI55434.1"/>
    <property type="molecule type" value="Genomic_DNA"/>
</dbReference>
<dbReference type="RefSeq" id="WP_011374832.1">
    <property type="nucleotide sequence ID" value="NC_007576.1"/>
</dbReference>
<dbReference type="SMR" id="Q38WJ8"/>
<dbReference type="STRING" id="314315.LCA_1133"/>
<dbReference type="GeneID" id="57133990"/>
<dbReference type="KEGG" id="lsa:LCA_1133"/>
<dbReference type="eggNOG" id="COG0035">
    <property type="taxonomic scope" value="Bacteria"/>
</dbReference>
<dbReference type="HOGENOM" id="CLU_067096_2_2_9"/>
<dbReference type="OrthoDB" id="9781675at2"/>
<dbReference type="UniPathway" id="UPA00574">
    <property type="reaction ID" value="UER00636"/>
</dbReference>
<dbReference type="Proteomes" id="UP000002707">
    <property type="component" value="Chromosome"/>
</dbReference>
<dbReference type="GO" id="GO:0005525">
    <property type="term" value="F:GTP binding"/>
    <property type="evidence" value="ECO:0007669"/>
    <property type="project" value="UniProtKB-KW"/>
</dbReference>
<dbReference type="GO" id="GO:0000287">
    <property type="term" value="F:magnesium ion binding"/>
    <property type="evidence" value="ECO:0007669"/>
    <property type="project" value="UniProtKB-UniRule"/>
</dbReference>
<dbReference type="GO" id="GO:0004845">
    <property type="term" value="F:uracil phosphoribosyltransferase activity"/>
    <property type="evidence" value="ECO:0007669"/>
    <property type="project" value="UniProtKB-UniRule"/>
</dbReference>
<dbReference type="GO" id="GO:0044206">
    <property type="term" value="P:UMP salvage"/>
    <property type="evidence" value="ECO:0007669"/>
    <property type="project" value="UniProtKB-UniRule"/>
</dbReference>
<dbReference type="GO" id="GO:0006223">
    <property type="term" value="P:uracil salvage"/>
    <property type="evidence" value="ECO:0007669"/>
    <property type="project" value="InterPro"/>
</dbReference>
<dbReference type="CDD" id="cd06223">
    <property type="entry name" value="PRTases_typeI"/>
    <property type="match status" value="1"/>
</dbReference>
<dbReference type="FunFam" id="3.40.50.2020:FF:000003">
    <property type="entry name" value="Uracil phosphoribosyltransferase"/>
    <property type="match status" value="1"/>
</dbReference>
<dbReference type="Gene3D" id="3.40.50.2020">
    <property type="match status" value="1"/>
</dbReference>
<dbReference type="HAMAP" id="MF_01218_B">
    <property type="entry name" value="Upp_B"/>
    <property type="match status" value="1"/>
</dbReference>
<dbReference type="InterPro" id="IPR000836">
    <property type="entry name" value="PRibTrfase_dom"/>
</dbReference>
<dbReference type="InterPro" id="IPR029057">
    <property type="entry name" value="PRTase-like"/>
</dbReference>
<dbReference type="InterPro" id="IPR034332">
    <property type="entry name" value="Upp_B"/>
</dbReference>
<dbReference type="InterPro" id="IPR050054">
    <property type="entry name" value="UPRTase/APRTase"/>
</dbReference>
<dbReference type="InterPro" id="IPR005765">
    <property type="entry name" value="Ura_phspho_trans"/>
</dbReference>
<dbReference type="NCBIfam" id="NF001097">
    <property type="entry name" value="PRK00129.1"/>
    <property type="match status" value="1"/>
</dbReference>
<dbReference type="NCBIfam" id="TIGR01091">
    <property type="entry name" value="upp"/>
    <property type="match status" value="1"/>
</dbReference>
<dbReference type="PANTHER" id="PTHR32315">
    <property type="entry name" value="ADENINE PHOSPHORIBOSYLTRANSFERASE"/>
    <property type="match status" value="1"/>
</dbReference>
<dbReference type="PANTHER" id="PTHR32315:SF4">
    <property type="entry name" value="URACIL PHOSPHORIBOSYLTRANSFERASE, CHLOROPLASTIC"/>
    <property type="match status" value="1"/>
</dbReference>
<dbReference type="Pfam" id="PF14681">
    <property type="entry name" value="UPRTase"/>
    <property type="match status" value="1"/>
</dbReference>
<dbReference type="SUPFAM" id="SSF53271">
    <property type="entry name" value="PRTase-like"/>
    <property type="match status" value="1"/>
</dbReference>
<protein>
    <recommendedName>
        <fullName evidence="1">Uracil phosphoribosyltransferase</fullName>
        <ecNumber evidence="1">2.4.2.9</ecNumber>
    </recommendedName>
    <alternativeName>
        <fullName evidence="1">UMP pyrophosphorylase</fullName>
    </alternativeName>
    <alternativeName>
        <fullName evidence="1">UPRTase</fullName>
    </alternativeName>
</protein>
<accession>Q38WJ8</accession>
<keyword id="KW-0021">Allosteric enzyme</keyword>
<keyword id="KW-0328">Glycosyltransferase</keyword>
<keyword id="KW-0342">GTP-binding</keyword>
<keyword id="KW-0460">Magnesium</keyword>
<keyword id="KW-0547">Nucleotide-binding</keyword>
<keyword id="KW-1185">Reference proteome</keyword>
<keyword id="KW-0808">Transferase</keyword>